<proteinExistence type="inferred from homology"/>
<accession>Q2FFL4</accession>
<dbReference type="EC" id="3.1.3.48"/>
<dbReference type="EMBL" id="CP000255">
    <property type="protein sequence ID" value="ABD21234.1"/>
    <property type="molecule type" value="Genomic_DNA"/>
</dbReference>
<dbReference type="RefSeq" id="WP_000228666.1">
    <property type="nucleotide sequence ID" value="NZ_CP027476.1"/>
</dbReference>
<dbReference type="SMR" id="Q2FFL4"/>
<dbReference type="KEGG" id="saa:SAUSA300_1862"/>
<dbReference type="HOGENOM" id="CLU_071415_2_3_9"/>
<dbReference type="Proteomes" id="UP000001939">
    <property type="component" value="Chromosome"/>
</dbReference>
<dbReference type="GO" id="GO:0005576">
    <property type="term" value="C:extracellular region"/>
    <property type="evidence" value="ECO:0007669"/>
    <property type="project" value="UniProtKB-SubCell"/>
</dbReference>
<dbReference type="GO" id="GO:0004725">
    <property type="term" value="F:protein tyrosine phosphatase activity"/>
    <property type="evidence" value="ECO:0007669"/>
    <property type="project" value="UniProtKB-EC"/>
</dbReference>
<dbReference type="CDD" id="cd16343">
    <property type="entry name" value="LMWPTP"/>
    <property type="match status" value="1"/>
</dbReference>
<dbReference type="FunFam" id="3.40.50.2300:FF:000268">
    <property type="entry name" value="Low molecular weight protein-tyrosine-phosphatase PtpA"/>
    <property type="match status" value="1"/>
</dbReference>
<dbReference type="Gene3D" id="3.40.50.2300">
    <property type="match status" value="1"/>
</dbReference>
<dbReference type="InterPro" id="IPR050438">
    <property type="entry name" value="LMW_PTPase"/>
</dbReference>
<dbReference type="InterPro" id="IPR023485">
    <property type="entry name" value="Ptyr_pPase"/>
</dbReference>
<dbReference type="InterPro" id="IPR036196">
    <property type="entry name" value="Ptyr_pPase_sf"/>
</dbReference>
<dbReference type="InterPro" id="IPR017867">
    <property type="entry name" value="Tyr_phospatase_low_mol_wt"/>
</dbReference>
<dbReference type="PANTHER" id="PTHR11717:SF7">
    <property type="entry name" value="LOW MOLECULAR WEIGHT PHOSPHOTYROSINE PROTEIN PHOSPHATASE"/>
    <property type="match status" value="1"/>
</dbReference>
<dbReference type="PANTHER" id="PTHR11717">
    <property type="entry name" value="LOW MOLECULAR WEIGHT PROTEIN TYROSINE PHOSPHATASE"/>
    <property type="match status" value="1"/>
</dbReference>
<dbReference type="Pfam" id="PF01451">
    <property type="entry name" value="LMWPc"/>
    <property type="match status" value="1"/>
</dbReference>
<dbReference type="PRINTS" id="PR00719">
    <property type="entry name" value="LMWPTPASE"/>
</dbReference>
<dbReference type="SMART" id="SM00226">
    <property type="entry name" value="LMWPc"/>
    <property type="match status" value="1"/>
</dbReference>
<dbReference type="SUPFAM" id="SSF52788">
    <property type="entry name" value="Phosphotyrosine protein phosphatases I"/>
    <property type="match status" value="1"/>
</dbReference>
<sequence length="154" mass="17491">MVDVAFVCLGNICRSPMAEAIMRQRLKDRNIHDIKVHSRGTGSWNLGEPPHEGTQKILNKHNIPFDGMISELFEATDDFDYIVAMDQSNVDNIKSINPNLKGQLFKLLEFSNMEESDVPDPYYTNNFEGVYDMVLSSCDNLIDYIVKDANLKEG</sequence>
<evidence type="ECO:0000250" key="1">
    <source>
        <dbReference type="UniProtKB" id="A0A0H3K9F2"/>
    </source>
</evidence>
<evidence type="ECO:0000250" key="2">
    <source>
        <dbReference type="UniProtKB" id="P11064"/>
    </source>
</evidence>
<evidence type="ECO:0000305" key="3"/>
<feature type="chain" id="PRO_0000300665" description="Low molecular weight protein-tyrosine-phosphatase PtpA">
    <location>
        <begin position="1"/>
        <end position="154"/>
    </location>
</feature>
<feature type="active site" description="Nucleophile" evidence="2">
    <location>
        <position position="8"/>
    </location>
</feature>
<feature type="active site" evidence="2">
    <location>
        <position position="14"/>
    </location>
</feature>
<feature type="active site" description="Proton donor" evidence="2">
    <location>
        <position position="120"/>
    </location>
</feature>
<reference key="1">
    <citation type="journal article" date="2006" name="Lancet">
        <title>Complete genome sequence of USA300, an epidemic clone of community-acquired meticillin-resistant Staphylococcus aureus.</title>
        <authorList>
            <person name="Diep B.A."/>
            <person name="Gill S.R."/>
            <person name="Chang R.F."/>
            <person name="Phan T.H."/>
            <person name="Chen J.H."/>
            <person name="Davidson M.G."/>
            <person name="Lin F."/>
            <person name="Lin J."/>
            <person name="Carleton H.A."/>
            <person name="Mongodin E.F."/>
            <person name="Sensabaugh G.F."/>
            <person name="Perdreau-Remington F."/>
        </authorList>
    </citation>
    <scope>NUCLEOTIDE SEQUENCE [LARGE SCALE GENOMIC DNA]</scope>
    <source>
        <strain>USA300</strain>
    </source>
</reference>
<name>PTPA_STAA3</name>
<comment type="function">
    <text evidence="1">Secreted tyrosine phosphatase that plays a critical role during infection as a bacterial effector protein that counteracts host defenses. Required for intramacrophage survival.</text>
</comment>
<comment type="catalytic activity">
    <reaction evidence="1">
        <text>O-phospho-L-tyrosyl-[protein] + H2O = L-tyrosyl-[protein] + phosphate</text>
        <dbReference type="Rhea" id="RHEA:10684"/>
        <dbReference type="Rhea" id="RHEA-COMP:10136"/>
        <dbReference type="Rhea" id="RHEA-COMP:20101"/>
        <dbReference type="ChEBI" id="CHEBI:15377"/>
        <dbReference type="ChEBI" id="CHEBI:43474"/>
        <dbReference type="ChEBI" id="CHEBI:46858"/>
        <dbReference type="ChEBI" id="CHEBI:61978"/>
        <dbReference type="EC" id="3.1.3.48"/>
    </reaction>
</comment>
<comment type="subunit">
    <text evidence="1">Interacts with host CORO1A.</text>
</comment>
<comment type="subcellular location">
    <subcellularLocation>
        <location evidence="1">Secreted</location>
    </subcellularLocation>
    <text evidence="1">Secreted intracellularly upon bacterial infection of macrophages.</text>
</comment>
<comment type="PTM">
    <text evidence="1">Phosphorylations at Tyr-122 and Tyr-123 are essential for phosphatase activity.</text>
</comment>
<comment type="similarity">
    <text evidence="3">Belongs to the low molecular weight phosphotyrosine protein phosphatase family.</text>
</comment>
<organism>
    <name type="scientific">Staphylococcus aureus (strain USA300)</name>
    <dbReference type="NCBI Taxonomy" id="367830"/>
    <lineage>
        <taxon>Bacteria</taxon>
        <taxon>Bacillati</taxon>
        <taxon>Bacillota</taxon>
        <taxon>Bacilli</taxon>
        <taxon>Bacillales</taxon>
        <taxon>Staphylococcaceae</taxon>
        <taxon>Staphylococcus</taxon>
    </lineage>
</organism>
<keyword id="KW-0378">Hydrolase</keyword>
<keyword id="KW-0597">Phosphoprotein</keyword>
<keyword id="KW-0904">Protein phosphatase</keyword>
<keyword id="KW-0964">Secreted</keyword>
<gene>
    <name type="primary">ptpA</name>
    <name type="ordered locus">SAUSA300_1862</name>
</gene>
<protein>
    <recommendedName>
        <fullName>Low molecular weight protein-tyrosine-phosphatase PtpA</fullName>
        <ecNumber>3.1.3.48</ecNumber>
    </recommendedName>
    <alternativeName>
        <fullName>Phosphotyrosine phosphatase A</fullName>
        <shortName>PTPase A</shortName>
    </alternativeName>
</protein>